<protein>
    <recommendedName>
        <fullName>Uncharacterized protein L7</fullName>
    </recommendedName>
</protein>
<organismHost>
    <name type="scientific">Acanthamoeba polyphaga</name>
    <name type="common">Amoeba</name>
    <dbReference type="NCBI Taxonomy" id="5757"/>
</organismHost>
<sequence length="155" mass="18374">MSKTNKRKIEKARIEAKILGFLESGRKEITSKKQLEKYAIGSLISYKNTNDEFKQGGFITKFADEYFIYITPDFTTKYRVKYKNVKTMWVGNVYKTKNDLVSLVETPQEPTNFEVTLNGITIYYAKNSFDVRRYKSTEKYKRMNAWCDYFKNPKK</sequence>
<feature type="chain" id="PRO_0000071175" description="Uncharacterized protein L7">
    <location>
        <begin position="1"/>
        <end position="155"/>
    </location>
</feature>
<organism>
    <name type="scientific">Acanthamoeba polyphaga mimivirus</name>
    <name type="common">APMV</name>
    <dbReference type="NCBI Taxonomy" id="212035"/>
    <lineage>
        <taxon>Viruses</taxon>
        <taxon>Varidnaviria</taxon>
        <taxon>Bamfordvirae</taxon>
        <taxon>Nucleocytoviricota</taxon>
        <taxon>Megaviricetes</taxon>
        <taxon>Imitervirales</taxon>
        <taxon>Mimiviridae</taxon>
        <taxon>Megamimivirinae</taxon>
        <taxon>Mimivirus</taxon>
        <taxon>Mimivirus bradfordmassiliense</taxon>
    </lineage>
</organism>
<comment type="similarity">
    <text evidence="1">Belongs to the mimivirus L6/L7/L57 family.</text>
</comment>
<evidence type="ECO:0000305" key="1"/>
<dbReference type="EMBL" id="AY653733">
    <property type="protein sequence ID" value="AAV50282.1"/>
    <property type="molecule type" value="Genomic_DNA"/>
</dbReference>
<dbReference type="KEGG" id="vg:9924576"/>
<dbReference type="OrthoDB" id="21699at10239"/>
<dbReference type="Proteomes" id="UP000001134">
    <property type="component" value="Genome"/>
</dbReference>
<accession>Q5UP80</accession>
<reference key="1">
    <citation type="journal article" date="2004" name="Science">
        <title>The 1.2-megabase genome sequence of Mimivirus.</title>
        <authorList>
            <person name="Raoult D."/>
            <person name="Audic S."/>
            <person name="Robert C."/>
            <person name="Abergel C."/>
            <person name="Renesto P."/>
            <person name="Ogata H."/>
            <person name="La Scola B."/>
            <person name="Susan M."/>
            <person name="Claverie J.-M."/>
        </authorList>
    </citation>
    <scope>NUCLEOTIDE SEQUENCE [LARGE SCALE GENOMIC DNA]</scope>
    <source>
        <strain>Rowbotham-Bradford</strain>
    </source>
</reference>
<gene>
    <name type="ordered locus">MIMI_L7</name>
</gene>
<proteinExistence type="inferred from homology"/>
<name>YL007_MIMIV</name>
<keyword id="KW-1185">Reference proteome</keyword>